<comment type="function">
    <text evidence="1">NDH-1 shuttles electrons from NADH, via FMN and iron-sulfur (Fe-S) centers, to quinones in the respiratory chain. The immediate electron acceptor for the enzyme in this species is believed to be ubiquinone. Couples the redox reaction to proton translocation (for every two electrons transferred, four hydrogen ions are translocated across the cytoplasmic membrane), and thus conserves the redox energy in a proton gradient.</text>
</comment>
<comment type="catalytic activity">
    <reaction evidence="1">
        <text>a quinone + NADH + 5 H(+)(in) = a quinol + NAD(+) + 4 H(+)(out)</text>
        <dbReference type="Rhea" id="RHEA:57888"/>
        <dbReference type="ChEBI" id="CHEBI:15378"/>
        <dbReference type="ChEBI" id="CHEBI:24646"/>
        <dbReference type="ChEBI" id="CHEBI:57540"/>
        <dbReference type="ChEBI" id="CHEBI:57945"/>
        <dbReference type="ChEBI" id="CHEBI:132124"/>
    </reaction>
</comment>
<comment type="subunit">
    <text evidence="1">NDH-1 is composed of 13 different subunits. Subunits NuoB, CD, E, F, and G constitute the peripheral sector of the complex.</text>
</comment>
<comment type="subcellular location">
    <subcellularLocation>
        <location evidence="1">Cell inner membrane</location>
        <topology evidence="1">Peripheral membrane protein</topology>
        <orientation evidence="1">Cytoplasmic side</orientation>
    </subcellularLocation>
</comment>
<comment type="similarity">
    <text evidence="1">In the N-terminal section; belongs to the complex I 30 kDa subunit family.</text>
</comment>
<comment type="similarity">
    <text evidence="1">In the C-terminal section; belongs to the complex I 49 kDa subunit family.</text>
</comment>
<gene>
    <name evidence="1" type="primary">nuoC</name>
    <name evidence="1" type="synonym">nuoCD</name>
    <name evidence="1" type="synonym">nuoD</name>
    <name type="ordered locus">ABAYE3058</name>
</gene>
<feature type="chain" id="PRO_0000358608" description="NADH-quinone oxidoreductase subunit C/D">
    <location>
        <begin position="1"/>
        <end position="595"/>
    </location>
</feature>
<feature type="region of interest" description="NADH dehydrogenase I subunit C" evidence="1">
    <location>
        <begin position="1"/>
        <end position="186"/>
    </location>
</feature>
<feature type="region of interest" description="NADH dehydrogenase I subunit D" evidence="1">
    <location>
        <begin position="210"/>
        <end position="595"/>
    </location>
</feature>
<accession>B0V899</accession>
<sequence>MAETDIAMPESTPVDSRPAFAIVEELKTKFGENFYVQATFEEFPTVWVERARVQEVLMFLRKVERPYVMLFDLSAMDERLRQHRDGLPASDFTVFYHLLSLERNSDIRIKVALNENDLNLPTATNIWPNANWYEREAYDMFGINFEGHPMLRRILLPTYWEGHPLRKEYSARATEYTPYMQDKAKQDFEQEHLRFVPEDWGLKRGNADEDFMFLNLGPNHPSAHGAFRIVLQLDGEEVKDCVPDIGYHHRGVEKMAERQTWHSFIPYTDRVDYLGGCAQNMPYVMAVEQLAGIKVPERAQVIRVMLNELFRINNHLLYCGTAIQDAGGMTPVFYMFADRQKVYDIVEAITGYRMHPAWFRIGGTAHDLPNNWQKLVKELLDWMPKRLNEYYTAAFKNSVFIGRTRNVAQYDAKSALAWGVTGTGLRATGIDFDVRKYRPYSGYENFDFEVPVEYEGDAYARVLVHFREIEQSLKIIKQCLDNMPSGPYKADHPLAVPPPKDKTLQDIETLITHFLSVSWGPVMPAGEASFMTEVVKGASTYYLTSDKATMSYRTRIRTPTFTHLQQIPSVINGSLVSDLIIYLATIDVVMADVDR</sequence>
<evidence type="ECO:0000255" key="1">
    <source>
        <dbReference type="HAMAP-Rule" id="MF_01359"/>
    </source>
</evidence>
<proteinExistence type="inferred from homology"/>
<reference key="1">
    <citation type="journal article" date="2008" name="PLoS ONE">
        <title>Comparative analysis of Acinetobacters: three genomes for three lifestyles.</title>
        <authorList>
            <person name="Vallenet D."/>
            <person name="Nordmann P."/>
            <person name="Barbe V."/>
            <person name="Poirel L."/>
            <person name="Mangenot S."/>
            <person name="Bataille E."/>
            <person name="Dossat C."/>
            <person name="Gas S."/>
            <person name="Kreimeyer A."/>
            <person name="Lenoble P."/>
            <person name="Oztas S."/>
            <person name="Poulain J."/>
            <person name="Segurens B."/>
            <person name="Robert C."/>
            <person name="Abergel C."/>
            <person name="Claverie J.-M."/>
            <person name="Raoult D."/>
            <person name="Medigue C."/>
            <person name="Weissenbach J."/>
            <person name="Cruveiller S."/>
        </authorList>
    </citation>
    <scope>NUCLEOTIDE SEQUENCE [LARGE SCALE GENOMIC DNA]</scope>
    <source>
        <strain>AYE</strain>
    </source>
</reference>
<protein>
    <recommendedName>
        <fullName evidence="1">NADH-quinone oxidoreductase subunit C/D</fullName>
        <ecNumber evidence="1">7.1.1.-</ecNumber>
    </recommendedName>
    <alternativeName>
        <fullName evidence="1">NADH dehydrogenase I subunit C/D</fullName>
    </alternativeName>
    <alternativeName>
        <fullName evidence="1">NDH-1 subunit C/D</fullName>
    </alternativeName>
</protein>
<keyword id="KW-0997">Cell inner membrane</keyword>
<keyword id="KW-1003">Cell membrane</keyword>
<keyword id="KW-0472">Membrane</keyword>
<keyword id="KW-0511">Multifunctional enzyme</keyword>
<keyword id="KW-0520">NAD</keyword>
<keyword id="KW-0874">Quinone</keyword>
<keyword id="KW-1278">Translocase</keyword>
<keyword id="KW-0813">Transport</keyword>
<keyword id="KW-0830">Ubiquinone</keyword>
<name>NUOCD_ACIBY</name>
<dbReference type="EC" id="7.1.1.-" evidence="1"/>
<dbReference type="EMBL" id="CU459141">
    <property type="protein sequence ID" value="CAM87877.1"/>
    <property type="molecule type" value="Genomic_DNA"/>
</dbReference>
<dbReference type="RefSeq" id="WP_000852150.1">
    <property type="nucleotide sequence ID" value="NZ_JBDGFB010000027.1"/>
</dbReference>
<dbReference type="SMR" id="B0V899"/>
<dbReference type="EnsemblBacteria" id="CAM87877">
    <property type="protein sequence ID" value="CAM87877"/>
    <property type="gene ID" value="ABAYE3058"/>
</dbReference>
<dbReference type="GeneID" id="92892684"/>
<dbReference type="KEGG" id="aby:ABAYE3058"/>
<dbReference type="HOGENOM" id="CLU_015134_3_2_6"/>
<dbReference type="GO" id="GO:0030964">
    <property type="term" value="C:NADH dehydrogenase complex"/>
    <property type="evidence" value="ECO:0007669"/>
    <property type="project" value="InterPro"/>
</dbReference>
<dbReference type="GO" id="GO:0005886">
    <property type="term" value="C:plasma membrane"/>
    <property type="evidence" value="ECO:0007669"/>
    <property type="project" value="UniProtKB-SubCell"/>
</dbReference>
<dbReference type="GO" id="GO:0051287">
    <property type="term" value="F:NAD binding"/>
    <property type="evidence" value="ECO:0007669"/>
    <property type="project" value="InterPro"/>
</dbReference>
<dbReference type="GO" id="GO:0008137">
    <property type="term" value="F:NADH dehydrogenase (ubiquinone) activity"/>
    <property type="evidence" value="ECO:0007669"/>
    <property type="project" value="InterPro"/>
</dbReference>
<dbReference type="GO" id="GO:0050136">
    <property type="term" value="F:NADH:ubiquinone reductase (non-electrogenic) activity"/>
    <property type="evidence" value="ECO:0007669"/>
    <property type="project" value="UniProtKB-UniRule"/>
</dbReference>
<dbReference type="GO" id="GO:0048038">
    <property type="term" value="F:quinone binding"/>
    <property type="evidence" value="ECO:0007669"/>
    <property type="project" value="UniProtKB-KW"/>
</dbReference>
<dbReference type="FunFam" id="1.10.645.10:FF:000001">
    <property type="entry name" value="NADH-quinone oxidoreductase subunit C/D"/>
    <property type="match status" value="1"/>
</dbReference>
<dbReference type="Gene3D" id="1.10.645.10">
    <property type="entry name" value="Cytochrome-c3 Hydrogenase, chain B"/>
    <property type="match status" value="1"/>
</dbReference>
<dbReference type="Gene3D" id="3.30.460.80">
    <property type="entry name" value="NADH:ubiquinone oxidoreductase, 30kDa subunit"/>
    <property type="match status" value="1"/>
</dbReference>
<dbReference type="HAMAP" id="MF_01357">
    <property type="entry name" value="NDH1_NuoC"/>
    <property type="match status" value="1"/>
</dbReference>
<dbReference type="HAMAP" id="MF_01359">
    <property type="entry name" value="NDH1_NuoCD_1"/>
    <property type="match status" value="1"/>
</dbReference>
<dbReference type="HAMAP" id="MF_01358">
    <property type="entry name" value="NDH1_NuoD"/>
    <property type="match status" value="1"/>
</dbReference>
<dbReference type="InterPro" id="IPR010218">
    <property type="entry name" value="NADH_DH_suC"/>
</dbReference>
<dbReference type="InterPro" id="IPR023062">
    <property type="entry name" value="NADH_DH_suCD"/>
</dbReference>
<dbReference type="InterPro" id="IPR001135">
    <property type="entry name" value="NADH_Q_OxRdtase_suD"/>
</dbReference>
<dbReference type="InterPro" id="IPR037232">
    <property type="entry name" value="NADH_quin_OxRdtase_su_C/D-like"/>
</dbReference>
<dbReference type="InterPro" id="IPR001268">
    <property type="entry name" value="NADH_UbQ_OxRdtase_30kDa_su"/>
</dbReference>
<dbReference type="InterPro" id="IPR014029">
    <property type="entry name" value="NADH_UbQ_OxRdtase_49kDa_CS"/>
</dbReference>
<dbReference type="InterPro" id="IPR020396">
    <property type="entry name" value="NADH_UbQ_OxRdtase_CS"/>
</dbReference>
<dbReference type="InterPro" id="IPR022885">
    <property type="entry name" value="NDH1_su_D/H"/>
</dbReference>
<dbReference type="InterPro" id="IPR029014">
    <property type="entry name" value="NiFe-Hase_large"/>
</dbReference>
<dbReference type="NCBIfam" id="TIGR01961">
    <property type="entry name" value="NuoC_fam"/>
    <property type="match status" value="1"/>
</dbReference>
<dbReference type="NCBIfam" id="TIGR01962">
    <property type="entry name" value="NuoD"/>
    <property type="match status" value="1"/>
</dbReference>
<dbReference type="NCBIfam" id="NF004739">
    <property type="entry name" value="PRK06075.1"/>
    <property type="match status" value="1"/>
</dbReference>
<dbReference type="NCBIfam" id="NF008728">
    <property type="entry name" value="PRK11742.1"/>
    <property type="match status" value="1"/>
</dbReference>
<dbReference type="PANTHER" id="PTHR11993:SF45">
    <property type="entry name" value="NADH-QUINONE OXIDOREDUCTASE SUBUNIT C_D"/>
    <property type="match status" value="1"/>
</dbReference>
<dbReference type="PANTHER" id="PTHR11993">
    <property type="entry name" value="NADH-UBIQUINONE OXIDOREDUCTASE 49 KDA SUBUNIT"/>
    <property type="match status" value="1"/>
</dbReference>
<dbReference type="Pfam" id="PF00329">
    <property type="entry name" value="Complex1_30kDa"/>
    <property type="match status" value="1"/>
</dbReference>
<dbReference type="Pfam" id="PF00346">
    <property type="entry name" value="Complex1_49kDa"/>
    <property type="match status" value="1"/>
</dbReference>
<dbReference type="SUPFAM" id="SSF56762">
    <property type="entry name" value="HydB/Nqo4-like"/>
    <property type="match status" value="1"/>
</dbReference>
<dbReference type="SUPFAM" id="SSF143243">
    <property type="entry name" value="Nqo5-like"/>
    <property type="match status" value="1"/>
</dbReference>
<dbReference type="PROSITE" id="PS00542">
    <property type="entry name" value="COMPLEX1_30K"/>
    <property type="match status" value="1"/>
</dbReference>
<dbReference type="PROSITE" id="PS00535">
    <property type="entry name" value="COMPLEX1_49K"/>
    <property type="match status" value="1"/>
</dbReference>
<organism>
    <name type="scientific">Acinetobacter baumannii (strain AYE)</name>
    <dbReference type="NCBI Taxonomy" id="509173"/>
    <lineage>
        <taxon>Bacteria</taxon>
        <taxon>Pseudomonadati</taxon>
        <taxon>Pseudomonadota</taxon>
        <taxon>Gammaproteobacteria</taxon>
        <taxon>Moraxellales</taxon>
        <taxon>Moraxellaceae</taxon>
        <taxon>Acinetobacter</taxon>
        <taxon>Acinetobacter calcoaceticus/baumannii complex</taxon>
    </lineage>
</organism>